<name>KFA_YEAST</name>
<proteinExistence type="evidence at protein level"/>
<feature type="chain" id="PRO_0000234660" description="Kynurenine formamidase">
    <location>
        <begin position="1"/>
        <end position="261"/>
    </location>
</feature>
<feature type="short sequence motif" description="HGGXW">
    <location>
        <begin position="36"/>
        <end position="40"/>
    </location>
</feature>
<feature type="active site" description="Nucleophile" evidence="1">
    <location>
        <position position="110"/>
    </location>
</feature>
<feature type="active site" evidence="1">
    <location>
        <position position="211"/>
    </location>
</feature>
<feature type="active site" evidence="1">
    <location>
        <position position="243"/>
    </location>
</feature>
<feature type="modified residue" description="Phosphoserine" evidence="3 4 5 6">
    <location>
        <position position="9"/>
    </location>
</feature>
<feature type="helix" evidence="7">
    <location>
        <begin position="15"/>
        <end position="17"/>
    </location>
</feature>
<feature type="strand" evidence="7">
    <location>
        <begin position="19"/>
        <end position="22"/>
    </location>
</feature>
<feature type="strand" evidence="7">
    <location>
        <begin position="30"/>
        <end position="35"/>
    </location>
</feature>
<feature type="turn" evidence="7">
    <location>
        <begin position="39"/>
        <end position="41"/>
    </location>
</feature>
<feature type="helix" evidence="7">
    <location>
        <begin position="47"/>
        <end position="50"/>
    </location>
</feature>
<feature type="helix" evidence="7">
    <location>
        <begin position="51"/>
        <end position="60"/>
    </location>
</feature>
<feature type="strand" evidence="7">
    <location>
        <begin position="66"/>
        <end position="71"/>
    </location>
</feature>
<feature type="turn" evidence="7">
    <location>
        <begin position="76"/>
        <end position="78"/>
    </location>
</feature>
<feature type="helix" evidence="7">
    <location>
        <begin position="83"/>
        <end position="99"/>
    </location>
</feature>
<feature type="strand" evidence="7">
    <location>
        <begin position="104"/>
        <end position="109"/>
    </location>
</feature>
<feature type="helix" evidence="7">
    <location>
        <begin position="111"/>
        <end position="120"/>
    </location>
</feature>
<feature type="helix" evidence="7">
    <location>
        <begin position="121"/>
        <end position="124"/>
    </location>
</feature>
<feature type="turn" evidence="7">
    <location>
        <begin position="127"/>
        <end position="129"/>
    </location>
</feature>
<feature type="helix" evidence="7">
    <location>
        <begin position="132"/>
        <end position="141"/>
    </location>
</feature>
<feature type="strand" evidence="7">
    <location>
        <begin position="144"/>
        <end position="151"/>
    </location>
</feature>
<feature type="helix" evidence="7">
    <location>
        <begin position="156"/>
        <end position="162"/>
    </location>
</feature>
<feature type="helix" evidence="7">
    <location>
        <begin position="164"/>
        <end position="166"/>
    </location>
</feature>
<feature type="helix" evidence="7">
    <location>
        <begin position="167"/>
        <end position="173"/>
    </location>
</feature>
<feature type="helix" evidence="7">
    <location>
        <begin position="178"/>
        <end position="180"/>
    </location>
</feature>
<feature type="helix" evidence="7">
    <location>
        <begin position="185"/>
        <end position="199"/>
    </location>
</feature>
<feature type="strand" evidence="7">
    <location>
        <begin position="202"/>
        <end position="208"/>
    </location>
</feature>
<feature type="helix" evidence="7">
    <location>
        <begin position="217"/>
        <end position="228"/>
    </location>
</feature>
<feature type="strand" evidence="7">
    <location>
        <begin position="233"/>
        <end position="238"/>
    </location>
</feature>
<feature type="helix" evidence="7">
    <location>
        <begin position="243"/>
        <end position="248"/>
    </location>
</feature>
<feature type="helix" evidence="7">
    <location>
        <begin position="250"/>
        <end position="258"/>
    </location>
</feature>
<keyword id="KW-0002">3D-structure</keyword>
<keyword id="KW-0378">Hydrolase</keyword>
<keyword id="KW-0597">Phosphoprotein</keyword>
<keyword id="KW-1185">Reference proteome</keyword>
<keyword id="KW-0823">Tryptophan catabolism</keyword>
<protein>
    <recommendedName>
        <fullName evidence="1">Kynurenine formamidase</fullName>
        <shortName evidence="1">KFA</shortName>
        <shortName evidence="1">KFase</shortName>
        <ecNumber evidence="1">3.5.1.9</ecNumber>
    </recommendedName>
    <alternativeName>
        <fullName evidence="1">Arylformamidase</fullName>
    </alternativeName>
    <alternativeName>
        <fullName>Biosynthesis of nicotinic acid protein 7</fullName>
    </alternativeName>
    <alternativeName>
        <fullName evidence="1">N-formylkynurenine formamidase</fullName>
        <shortName evidence="1">FKF</shortName>
    </alternativeName>
</protein>
<dbReference type="EC" id="3.5.1.9" evidence="1"/>
<dbReference type="EMBL" id="U33007">
    <property type="protein sequence ID" value="AAB64885.1"/>
    <property type="molecule type" value="Genomic_DNA"/>
</dbReference>
<dbReference type="EMBL" id="BK006938">
    <property type="protein sequence ID" value="DAA12267.1"/>
    <property type="molecule type" value="Genomic_DNA"/>
</dbReference>
<dbReference type="PIR" id="S69709">
    <property type="entry name" value="S69709"/>
</dbReference>
<dbReference type="RefSeq" id="NP_010716.3">
    <property type="nucleotide sequence ID" value="NM_001180736.3"/>
</dbReference>
<dbReference type="PDB" id="1VKH">
    <property type="method" value="X-ray"/>
    <property type="resolution" value="1.85 A"/>
    <property type="chains" value="A/B=1-261"/>
</dbReference>
<dbReference type="PDBsum" id="1VKH"/>
<dbReference type="SMR" id="Q04066"/>
<dbReference type="BioGRID" id="32486">
    <property type="interactions" value="34"/>
</dbReference>
<dbReference type="DIP" id="DIP-4139N"/>
<dbReference type="FunCoup" id="Q04066">
    <property type="interactions" value="180"/>
</dbReference>
<dbReference type="IntAct" id="Q04066">
    <property type="interactions" value="1"/>
</dbReference>
<dbReference type="STRING" id="4932.YDR428C"/>
<dbReference type="ESTHER" id="yeast-YDR428C">
    <property type="family name" value="Kynurenine-formamidase"/>
</dbReference>
<dbReference type="iPTMnet" id="Q04066"/>
<dbReference type="PaxDb" id="4932-YDR428C"/>
<dbReference type="PeptideAtlas" id="Q04066"/>
<dbReference type="EnsemblFungi" id="YDR428C_mRNA">
    <property type="protein sequence ID" value="YDR428C"/>
    <property type="gene ID" value="YDR428C"/>
</dbReference>
<dbReference type="GeneID" id="852038"/>
<dbReference type="KEGG" id="sce:YDR428C"/>
<dbReference type="AGR" id="SGD:S000002836"/>
<dbReference type="SGD" id="S000002836">
    <property type="gene designation" value="BNA7"/>
</dbReference>
<dbReference type="VEuPathDB" id="FungiDB:YDR428C"/>
<dbReference type="eggNOG" id="ENOG502S28Q">
    <property type="taxonomic scope" value="Eukaryota"/>
</dbReference>
<dbReference type="HOGENOM" id="CLU_016852_1_0_1"/>
<dbReference type="InParanoid" id="Q04066"/>
<dbReference type="OMA" id="DHYDIMK"/>
<dbReference type="OrthoDB" id="420264at2759"/>
<dbReference type="BioCyc" id="YEAST:MONOMER3O-17"/>
<dbReference type="BRENDA" id="3.5.1.9">
    <property type="organism ID" value="984"/>
</dbReference>
<dbReference type="UniPathway" id="UPA00333">
    <property type="reaction ID" value="UER00454"/>
</dbReference>
<dbReference type="BioGRID-ORCS" id="852038">
    <property type="hits" value="1 hit in 10 CRISPR screens"/>
</dbReference>
<dbReference type="EvolutionaryTrace" id="Q04066"/>
<dbReference type="PRO" id="PR:Q04066"/>
<dbReference type="Proteomes" id="UP000002311">
    <property type="component" value="Chromosome IV"/>
</dbReference>
<dbReference type="RNAct" id="Q04066">
    <property type="molecule type" value="protein"/>
</dbReference>
<dbReference type="GO" id="GO:0004061">
    <property type="term" value="F:arylformamidase activity"/>
    <property type="evidence" value="ECO:0000314"/>
    <property type="project" value="SGD"/>
</dbReference>
<dbReference type="GO" id="GO:0034354">
    <property type="term" value="P:'de novo' NAD biosynthetic process from L-tryptophan"/>
    <property type="evidence" value="ECO:0007669"/>
    <property type="project" value="UniProtKB-UniRule"/>
</dbReference>
<dbReference type="GO" id="GO:0019441">
    <property type="term" value="P:L-tryptophan catabolic process to kynurenine"/>
    <property type="evidence" value="ECO:0007669"/>
    <property type="project" value="UniProtKB-UniRule"/>
</dbReference>
<dbReference type="GO" id="GO:0009435">
    <property type="term" value="P:NAD biosynthetic process"/>
    <property type="evidence" value="ECO:0000314"/>
    <property type="project" value="SGD"/>
</dbReference>
<dbReference type="GO" id="GO:0030307">
    <property type="term" value="P:positive regulation of cell growth"/>
    <property type="evidence" value="ECO:0000315"/>
    <property type="project" value="UniProtKB"/>
</dbReference>
<dbReference type="FunFam" id="3.40.50.1820:FF:000465">
    <property type="entry name" value="Kynurenine formamidase"/>
    <property type="match status" value="1"/>
</dbReference>
<dbReference type="Gene3D" id="3.40.50.1820">
    <property type="entry name" value="alpha/beta hydrolase"/>
    <property type="match status" value="1"/>
</dbReference>
<dbReference type="HAMAP" id="MF_03014">
    <property type="entry name" value="KFase"/>
    <property type="match status" value="1"/>
</dbReference>
<dbReference type="InterPro" id="IPR013094">
    <property type="entry name" value="AB_hydrolase_3"/>
</dbReference>
<dbReference type="InterPro" id="IPR029058">
    <property type="entry name" value="AB_hydrolase_fold"/>
</dbReference>
<dbReference type="InterPro" id="IPR027519">
    <property type="entry name" value="KFase_ver/fungi-typ"/>
</dbReference>
<dbReference type="Pfam" id="PF07859">
    <property type="entry name" value="Abhydrolase_3"/>
    <property type="match status" value="1"/>
</dbReference>
<dbReference type="SUPFAM" id="SSF53474">
    <property type="entry name" value="alpha/beta-Hydrolases"/>
    <property type="match status" value="1"/>
</dbReference>
<comment type="function">
    <text evidence="1 2">Catalyzes the hydrolysis of N-formyl-L-kynurenine to L-kynurenine, the second step in the kynurenine pathway of tryptophan degradation. Kynurenine may be further oxidized to nicotinic acid, NAD(H) and NADP(H). Required for elimination of toxic metabolites.</text>
</comment>
<comment type="catalytic activity">
    <reaction evidence="1 2">
        <text>N-formyl-L-kynurenine + H2O = L-kynurenine + formate + H(+)</text>
        <dbReference type="Rhea" id="RHEA:13009"/>
        <dbReference type="ChEBI" id="CHEBI:15377"/>
        <dbReference type="ChEBI" id="CHEBI:15378"/>
        <dbReference type="ChEBI" id="CHEBI:15740"/>
        <dbReference type="ChEBI" id="CHEBI:57959"/>
        <dbReference type="ChEBI" id="CHEBI:58629"/>
        <dbReference type="EC" id="3.5.1.9"/>
    </reaction>
</comment>
<comment type="pathway">
    <text evidence="1 2">Amino-acid degradation; L-tryptophan degradation via kynurenine pathway; L-kynurenine from L-tryptophan: step 2/2.</text>
</comment>
<comment type="subunit">
    <text evidence="1">Homodimer.</text>
</comment>
<comment type="domain">
    <text evidence="2">The main chain amide nitrogen atoms of the second glycine and its adjacent residue in the HGGXW motif define the oxyanion hole, and stabilize the oxyanion that forms during the nucleophilic attack by the catalytic serine during substrate cleavage.</text>
</comment>
<comment type="disruption phenotype">
    <text evidence="2">Cells exhibit slow growth in the absence of nicotinate.</text>
</comment>
<comment type="similarity">
    <text evidence="1">Belongs to the kynurenine formamidase family.</text>
</comment>
<reference key="1">
    <citation type="journal article" date="1997" name="Nature">
        <title>The nucleotide sequence of Saccharomyces cerevisiae chromosome IV.</title>
        <authorList>
            <person name="Jacq C."/>
            <person name="Alt-Moerbe J."/>
            <person name="Andre B."/>
            <person name="Arnold W."/>
            <person name="Bahr A."/>
            <person name="Ballesta J.P.G."/>
            <person name="Bargues M."/>
            <person name="Baron L."/>
            <person name="Becker A."/>
            <person name="Biteau N."/>
            <person name="Bloecker H."/>
            <person name="Blugeon C."/>
            <person name="Boskovic J."/>
            <person name="Brandt P."/>
            <person name="Brueckner M."/>
            <person name="Buitrago M.J."/>
            <person name="Coster F."/>
            <person name="Delaveau T."/>
            <person name="del Rey F."/>
            <person name="Dujon B."/>
            <person name="Eide L.G."/>
            <person name="Garcia-Cantalejo J.M."/>
            <person name="Goffeau A."/>
            <person name="Gomez-Peris A."/>
            <person name="Granotier C."/>
            <person name="Hanemann V."/>
            <person name="Hankeln T."/>
            <person name="Hoheisel J.D."/>
            <person name="Jaeger W."/>
            <person name="Jimenez A."/>
            <person name="Jonniaux J.-L."/>
            <person name="Kraemer C."/>
            <person name="Kuester H."/>
            <person name="Laamanen P."/>
            <person name="Legros Y."/>
            <person name="Louis E.J."/>
            <person name="Moeller-Rieker S."/>
            <person name="Monnet A."/>
            <person name="Moro M."/>
            <person name="Mueller-Auer S."/>
            <person name="Nussbaumer B."/>
            <person name="Paricio N."/>
            <person name="Paulin L."/>
            <person name="Perea J."/>
            <person name="Perez-Alonso M."/>
            <person name="Perez-Ortin J.E."/>
            <person name="Pohl T.M."/>
            <person name="Prydz H."/>
            <person name="Purnelle B."/>
            <person name="Rasmussen S.W."/>
            <person name="Remacha M.A."/>
            <person name="Revuelta J.L."/>
            <person name="Rieger M."/>
            <person name="Salom D."/>
            <person name="Saluz H.P."/>
            <person name="Saiz J.E."/>
            <person name="Saren A.-M."/>
            <person name="Schaefer M."/>
            <person name="Scharfe M."/>
            <person name="Schmidt E.R."/>
            <person name="Schneider C."/>
            <person name="Scholler P."/>
            <person name="Schwarz S."/>
            <person name="Soler-Mira A."/>
            <person name="Urrestarazu L.A."/>
            <person name="Verhasselt P."/>
            <person name="Vissers S."/>
            <person name="Voet M."/>
            <person name="Volckaert G."/>
            <person name="Wagner G."/>
            <person name="Wambutt R."/>
            <person name="Wedler E."/>
            <person name="Wedler H."/>
            <person name="Woelfl S."/>
            <person name="Harris D.E."/>
            <person name="Bowman S."/>
            <person name="Brown D."/>
            <person name="Churcher C.M."/>
            <person name="Connor R."/>
            <person name="Dedman K."/>
            <person name="Gentles S."/>
            <person name="Hamlin N."/>
            <person name="Hunt S."/>
            <person name="Jones L."/>
            <person name="McDonald S."/>
            <person name="Murphy L.D."/>
            <person name="Niblett D."/>
            <person name="Odell C."/>
            <person name="Oliver K."/>
            <person name="Rajandream M.A."/>
            <person name="Richards C."/>
            <person name="Shore L."/>
            <person name="Walsh S.V."/>
            <person name="Barrell B.G."/>
            <person name="Dietrich F.S."/>
            <person name="Mulligan J.T."/>
            <person name="Allen E."/>
            <person name="Araujo R."/>
            <person name="Aviles E."/>
            <person name="Berno A."/>
            <person name="Carpenter J."/>
            <person name="Chen E."/>
            <person name="Cherry J.M."/>
            <person name="Chung E."/>
            <person name="Duncan M."/>
            <person name="Hunicke-Smith S."/>
            <person name="Hyman R.W."/>
            <person name="Komp C."/>
            <person name="Lashkari D."/>
            <person name="Lew H."/>
            <person name="Lin D."/>
            <person name="Mosedale D."/>
            <person name="Nakahara K."/>
            <person name="Namath A."/>
            <person name="Oefner P."/>
            <person name="Oh C."/>
            <person name="Petel F.X."/>
            <person name="Roberts D."/>
            <person name="Schramm S."/>
            <person name="Schroeder M."/>
            <person name="Shogren T."/>
            <person name="Shroff N."/>
            <person name="Winant A."/>
            <person name="Yelton M.A."/>
            <person name="Botstein D."/>
            <person name="Davis R.W."/>
            <person name="Johnston M."/>
            <person name="Andrews S."/>
            <person name="Brinkman R."/>
            <person name="Cooper J."/>
            <person name="Ding H."/>
            <person name="Du Z."/>
            <person name="Favello A."/>
            <person name="Fulton L."/>
            <person name="Gattung S."/>
            <person name="Greco T."/>
            <person name="Hallsworth K."/>
            <person name="Hawkins J."/>
            <person name="Hillier L.W."/>
            <person name="Jier M."/>
            <person name="Johnson D."/>
            <person name="Johnston L."/>
            <person name="Kirsten J."/>
            <person name="Kucaba T."/>
            <person name="Langston Y."/>
            <person name="Latreille P."/>
            <person name="Le T."/>
            <person name="Mardis E."/>
            <person name="Menezes S."/>
            <person name="Miller N."/>
            <person name="Nhan M."/>
            <person name="Pauley A."/>
            <person name="Peluso D."/>
            <person name="Rifkin L."/>
            <person name="Riles L."/>
            <person name="Taich A."/>
            <person name="Trevaskis E."/>
            <person name="Vignati D."/>
            <person name="Wilcox L."/>
            <person name="Wohldman P."/>
            <person name="Vaudin M."/>
            <person name="Wilson R."/>
            <person name="Waterston R."/>
            <person name="Albermann K."/>
            <person name="Hani J."/>
            <person name="Heumann K."/>
            <person name="Kleine K."/>
            <person name="Mewes H.-W."/>
            <person name="Zollner A."/>
            <person name="Zaccaria P."/>
        </authorList>
    </citation>
    <scope>NUCLEOTIDE SEQUENCE [LARGE SCALE GENOMIC DNA]</scope>
    <source>
        <strain>ATCC 204508 / S288c</strain>
    </source>
</reference>
<reference key="2">
    <citation type="journal article" date="2014" name="G3 (Bethesda)">
        <title>The reference genome sequence of Saccharomyces cerevisiae: Then and now.</title>
        <authorList>
            <person name="Engel S.R."/>
            <person name="Dietrich F.S."/>
            <person name="Fisk D.G."/>
            <person name="Binkley G."/>
            <person name="Balakrishnan R."/>
            <person name="Costanzo M.C."/>
            <person name="Dwight S.S."/>
            <person name="Hitz B.C."/>
            <person name="Karra K."/>
            <person name="Nash R.S."/>
            <person name="Weng S."/>
            <person name="Wong E.D."/>
            <person name="Lloyd P."/>
            <person name="Skrzypek M.S."/>
            <person name="Miyasato S.R."/>
            <person name="Simison M."/>
            <person name="Cherry J.M."/>
        </authorList>
    </citation>
    <scope>GENOME REANNOTATION</scope>
    <source>
        <strain>ATCC 204508 / S288c</strain>
    </source>
</reference>
<reference key="3">
    <citation type="journal article" date="2004" name="Mol. Cell. Proteomics">
        <title>Synergistic computational and experimental proteomics approaches for more accurate detection of active serine hydrolases in yeast.</title>
        <authorList>
            <person name="Baxter S.M."/>
            <person name="Rosenblum J.S."/>
            <person name="Knutson S."/>
            <person name="Nelson M.R."/>
            <person name="Montimurro J.S."/>
            <person name="Di Gennaro J.A."/>
            <person name="Speir J.A."/>
            <person name="Burbaum J.J."/>
            <person name="Fetrow J.S."/>
        </authorList>
    </citation>
    <scope>IDENTIFICATION AS A SERINE HYDROLASE</scope>
    <scope>IDENTIFICATION BY MASS SPECTROMETRY</scope>
</reference>
<reference key="4">
    <citation type="journal article" date="2005" name="Mol. Cell. Proteomics">
        <title>Quantitative phosphoproteomics applied to the yeast pheromone signaling pathway.</title>
        <authorList>
            <person name="Gruhler A."/>
            <person name="Olsen J.V."/>
            <person name="Mohammed S."/>
            <person name="Mortensen P."/>
            <person name="Faergeman N.J."/>
            <person name="Mann M."/>
            <person name="Jensen O.N."/>
        </authorList>
    </citation>
    <scope>PHOSPHORYLATION [LARGE SCALE ANALYSIS] AT SER-9</scope>
    <scope>IDENTIFICATION BY MASS SPECTROMETRY [LARGE SCALE ANALYSIS]</scope>
    <source>
        <strain>YAL6B</strain>
    </source>
</reference>
<reference key="5">
    <citation type="journal article" date="2007" name="J. Proteome Res.">
        <title>Large-scale phosphorylation analysis of alpha-factor-arrested Saccharomyces cerevisiae.</title>
        <authorList>
            <person name="Li X."/>
            <person name="Gerber S.A."/>
            <person name="Rudner A.D."/>
            <person name="Beausoleil S.A."/>
            <person name="Haas W."/>
            <person name="Villen J."/>
            <person name="Elias J.E."/>
            <person name="Gygi S.P."/>
        </authorList>
    </citation>
    <scope>PHOSPHORYLATION [LARGE SCALE ANALYSIS] AT SER-9</scope>
    <scope>IDENTIFICATION BY MASS SPECTROMETRY [LARGE SCALE ANALYSIS]</scope>
    <source>
        <strain>ADR376</strain>
    </source>
</reference>
<reference key="6">
    <citation type="journal article" date="2008" name="Biochemistry">
        <title>Identification of formyl kynurenine formamidase and kynurenine aminotransferase from Saccharomyces cerevisiae using crystallographic, bioinformatic and biochemical evidence.</title>
        <authorList>
            <person name="Wogulis M."/>
            <person name="Chew E.R."/>
            <person name="Donohoue P.D."/>
            <person name="Wilson D.K."/>
        </authorList>
    </citation>
    <scope>FUNCTION</scope>
    <scope>CATALYTIC ACTIVITY</scope>
    <scope>PATHWAY</scope>
    <scope>DISRUPTION PHENOTYPE</scope>
</reference>
<reference key="7">
    <citation type="journal article" date="2008" name="Mol. Cell. Proteomics">
        <title>A multidimensional chromatography technology for in-depth phosphoproteome analysis.</title>
        <authorList>
            <person name="Albuquerque C.P."/>
            <person name="Smolka M.B."/>
            <person name="Payne S.H."/>
            <person name="Bafna V."/>
            <person name="Eng J."/>
            <person name="Zhou H."/>
        </authorList>
    </citation>
    <scope>PHOSPHORYLATION [LARGE SCALE ANALYSIS] AT SER-9</scope>
    <scope>IDENTIFICATION BY MASS SPECTROMETRY [LARGE SCALE ANALYSIS]</scope>
</reference>
<reference key="8">
    <citation type="journal article" date="2009" name="Science">
        <title>Global analysis of Cdk1 substrate phosphorylation sites provides insights into evolution.</title>
        <authorList>
            <person name="Holt L.J."/>
            <person name="Tuch B.B."/>
            <person name="Villen J."/>
            <person name="Johnson A.D."/>
            <person name="Gygi S.P."/>
            <person name="Morgan D.O."/>
        </authorList>
    </citation>
    <scope>PHOSPHORYLATION [LARGE SCALE ANALYSIS] AT SER-9</scope>
    <scope>IDENTIFICATION BY MASS SPECTROMETRY [LARGE SCALE ANALYSIS]</scope>
</reference>
<reference key="9">
    <citation type="journal article" date="2005" name="Proteins">
        <title>Crystal structure of an alpha/beta serine hydrolase (YDR428C) from Saccharomyces cerevisiae at 1.85 A resolution.</title>
        <authorList>
            <person name="Arndt J.W."/>
            <person name="Schwarzenbacher R."/>
            <person name="Page R."/>
            <person name="Abdubek P."/>
            <person name="Ambing E."/>
            <person name="Biorac T."/>
            <person name="Canaves J.M."/>
            <person name="Chiu H.-J."/>
            <person name="Dai X."/>
            <person name="Deacon A.M."/>
            <person name="DiDonato M."/>
            <person name="Elsliger M.-A."/>
            <person name="Godzik A."/>
            <person name="Grittini C."/>
            <person name="Grzechnik S.K."/>
            <person name="Hale J."/>
            <person name="Hampton E."/>
            <person name="Han G.W."/>
            <person name="Haugen J."/>
            <person name="Hornsby M."/>
            <person name="Klock H.E."/>
            <person name="Koesema E."/>
            <person name="Kreusch A."/>
            <person name="Kuhn P."/>
            <person name="Jaroszewski L."/>
            <person name="Lesley S.A."/>
            <person name="Levin I."/>
            <person name="McMullan D."/>
            <person name="McPhillips T.M."/>
            <person name="Miller M.D."/>
            <person name="Morse A."/>
            <person name="Moy K."/>
            <person name="Nigoghossian E."/>
            <person name="Ouyang J."/>
            <person name="Peti W.S."/>
            <person name="Quijano K."/>
            <person name="Reyes R."/>
            <person name="Sims E."/>
            <person name="Spraggon G."/>
            <person name="Stevens R.C."/>
            <person name="van den Bedem H."/>
            <person name="Velasquez J."/>
            <person name="Vincent J."/>
            <person name="von Delft F."/>
            <person name="Wang X."/>
            <person name="West B."/>
            <person name="White A."/>
            <person name="Wolf G."/>
            <person name="Xu Q."/>
            <person name="Zagnitko O."/>
            <person name="Hodgson K.O."/>
            <person name="Wooley J."/>
            <person name="Wilson I.A."/>
        </authorList>
    </citation>
    <scope>X-RAY CRYSTALLOGRAPHY (1.85 ANGSTROMS)</scope>
</reference>
<accession>Q04066</accession>
<accession>D6VT57</accession>
<evidence type="ECO:0000255" key="1">
    <source>
        <dbReference type="HAMAP-Rule" id="MF_03014"/>
    </source>
</evidence>
<evidence type="ECO:0000269" key="2">
    <source>
    </source>
</evidence>
<evidence type="ECO:0007744" key="3">
    <source>
    </source>
</evidence>
<evidence type="ECO:0007744" key="4">
    <source>
    </source>
</evidence>
<evidence type="ECO:0007744" key="5">
    <source>
    </source>
</evidence>
<evidence type="ECO:0007744" key="6">
    <source>
    </source>
</evidence>
<evidence type="ECO:0007829" key="7">
    <source>
        <dbReference type="PDB" id="1VKH"/>
    </source>
</evidence>
<gene>
    <name evidence="1" type="primary">BNA7</name>
    <name type="ordered locus">YDR428C</name>
</gene>
<sequence length="261" mass="29991">MSNTVRAISPDITLFNKTLTFQEISQNTREAVIYIHGGAWNDPENTPNDFNQLANTIKSMDTESTVCQYSIEYRLSPEITNPRNLYDAVSNITRLVKEKGLTNINMVGHSVGATFIWQILAALKDPQEKMSEAQLQMLGLLQIVKRVFLLDGIYSLKELLVEYPEYDCFTRLAFPDGIQMYEEEPSRVMPYVKKALSRFSIDMHLVHSYSDELLTLRQTNCLISCLQDYQLSFKLYLDDLGLHNDVYKNGKVAKYIFDNIC</sequence>
<organism>
    <name type="scientific">Saccharomyces cerevisiae (strain ATCC 204508 / S288c)</name>
    <name type="common">Baker's yeast</name>
    <dbReference type="NCBI Taxonomy" id="559292"/>
    <lineage>
        <taxon>Eukaryota</taxon>
        <taxon>Fungi</taxon>
        <taxon>Dikarya</taxon>
        <taxon>Ascomycota</taxon>
        <taxon>Saccharomycotina</taxon>
        <taxon>Saccharomycetes</taxon>
        <taxon>Saccharomycetales</taxon>
        <taxon>Saccharomycetaceae</taxon>
        <taxon>Saccharomyces</taxon>
    </lineage>
</organism>